<name>YXIT_BACSU</name>
<proteinExistence type="inferred from homology"/>
<sequence length="80" mass="9050">MKWNNMLKAAGIAVLLFSVFAYAAPSLKAVQAKTPTVSTHTYKKIKELTYPQVHHVGNAAFEKKINQELKAYMNNRIRNT</sequence>
<evidence type="ECO:0000255" key="1"/>
<evidence type="ECO:0000305" key="2"/>
<protein>
    <recommendedName>
        <fullName>Uncharacterized protein YxiT</fullName>
    </recommendedName>
</protein>
<keyword id="KW-1185">Reference proteome</keyword>
<keyword id="KW-0732">Signal</keyword>
<reference key="1">
    <citation type="journal article" date="1996" name="Microbiology">
        <title>Sequencing of a 65 kb region of the Bacillus subtilis genome containing the lic and cel loci, and creation of a 177 kb contig covering the gnt-sacXY region.</title>
        <authorList>
            <person name="Yoshida K."/>
            <person name="Shindo K."/>
            <person name="Sano H."/>
            <person name="Seki S."/>
            <person name="Fujimura M."/>
            <person name="Yanai N."/>
            <person name="Miwa Y."/>
            <person name="Fujita Y."/>
        </authorList>
    </citation>
    <scope>NUCLEOTIDE SEQUENCE [GENOMIC DNA]</scope>
    <source>
        <strain>168 / BGSC1A1</strain>
    </source>
</reference>
<reference key="2">
    <citation type="journal article" date="1997" name="Nature">
        <title>The complete genome sequence of the Gram-positive bacterium Bacillus subtilis.</title>
        <authorList>
            <person name="Kunst F."/>
            <person name="Ogasawara N."/>
            <person name="Moszer I."/>
            <person name="Albertini A.M."/>
            <person name="Alloni G."/>
            <person name="Azevedo V."/>
            <person name="Bertero M.G."/>
            <person name="Bessieres P."/>
            <person name="Bolotin A."/>
            <person name="Borchert S."/>
            <person name="Borriss R."/>
            <person name="Boursier L."/>
            <person name="Brans A."/>
            <person name="Braun M."/>
            <person name="Brignell S.C."/>
            <person name="Bron S."/>
            <person name="Brouillet S."/>
            <person name="Bruschi C.V."/>
            <person name="Caldwell B."/>
            <person name="Capuano V."/>
            <person name="Carter N.M."/>
            <person name="Choi S.-K."/>
            <person name="Codani J.-J."/>
            <person name="Connerton I.F."/>
            <person name="Cummings N.J."/>
            <person name="Daniel R.A."/>
            <person name="Denizot F."/>
            <person name="Devine K.M."/>
            <person name="Duesterhoeft A."/>
            <person name="Ehrlich S.D."/>
            <person name="Emmerson P.T."/>
            <person name="Entian K.-D."/>
            <person name="Errington J."/>
            <person name="Fabret C."/>
            <person name="Ferrari E."/>
            <person name="Foulger D."/>
            <person name="Fritz C."/>
            <person name="Fujita M."/>
            <person name="Fujita Y."/>
            <person name="Fuma S."/>
            <person name="Galizzi A."/>
            <person name="Galleron N."/>
            <person name="Ghim S.-Y."/>
            <person name="Glaser P."/>
            <person name="Goffeau A."/>
            <person name="Golightly E.J."/>
            <person name="Grandi G."/>
            <person name="Guiseppi G."/>
            <person name="Guy B.J."/>
            <person name="Haga K."/>
            <person name="Haiech J."/>
            <person name="Harwood C.R."/>
            <person name="Henaut A."/>
            <person name="Hilbert H."/>
            <person name="Holsappel S."/>
            <person name="Hosono S."/>
            <person name="Hullo M.-F."/>
            <person name="Itaya M."/>
            <person name="Jones L.-M."/>
            <person name="Joris B."/>
            <person name="Karamata D."/>
            <person name="Kasahara Y."/>
            <person name="Klaerr-Blanchard M."/>
            <person name="Klein C."/>
            <person name="Kobayashi Y."/>
            <person name="Koetter P."/>
            <person name="Koningstein G."/>
            <person name="Krogh S."/>
            <person name="Kumano M."/>
            <person name="Kurita K."/>
            <person name="Lapidus A."/>
            <person name="Lardinois S."/>
            <person name="Lauber J."/>
            <person name="Lazarevic V."/>
            <person name="Lee S.-M."/>
            <person name="Levine A."/>
            <person name="Liu H."/>
            <person name="Masuda S."/>
            <person name="Mauel C."/>
            <person name="Medigue C."/>
            <person name="Medina N."/>
            <person name="Mellado R.P."/>
            <person name="Mizuno M."/>
            <person name="Moestl D."/>
            <person name="Nakai S."/>
            <person name="Noback M."/>
            <person name="Noone D."/>
            <person name="O'Reilly M."/>
            <person name="Ogawa K."/>
            <person name="Ogiwara A."/>
            <person name="Oudega B."/>
            <person name="Park S.-H."/>
            <person name="Parro V."/>
            <person name="Pohl T.M."/>
            <person name="Portetelle D."/>
            <person name="Porwollik S."/>
            <person name="Prescott A.M."/>
            <person name="Presecan E."/>
            <person name="Pujic P."/>
            <person name="Purnelle B."/>
            <person name="Rapoport G."/>
            <person name="Rey M."/>
            <person name="Reynolds S."/>
            <person name="Rieger M."/>
            <person name="Rivolta C."/>
            <person name="Rocha E."/>
            <person name="Roche B."/>
            <person name="Rose M."/>
            <person name="Sadaie Y."/>
            <person name="Sato T."/>
            <person name="Scanlan E."/>
            <person name="Schleich S."/>
            <person name="Schroeter R."/>
            <person name="Scoffone F."/>
            <person name="Sekiguchi J."/>
            <person name="Sekowska A."/>
            <person name="Seror S.J."/>
            <person name="Serror P."/>
            <person name="Shin B.-S."/>
            <person name="Soldo B."/>
            <person name="Sorokin A."/>
            <person name="Tacconi E."/>
            <person name="Takagi T."/>
            <person name="Takahashi H."/>
            <person name="Takemaru K."/>
            <person name="Takeuchi M."/>
            <person name="Tamakoshi A."/>
            <person name="Tanaka T."/>
            <person name="Terpstra P."/>
            <person name="Tognoni A."/>
            <person name="Tosato V."/>
            <person name="Uchiyama S."/>
            <person name="Vandenbol M."/>
            <person name="Vannier F."/>
            <person name="Vassarotti A."/>
            <person name="Viari A."/>
            <person name="Wambutt R."/>
            <person name="Wedler E."/>
            <person name="Wedler H."/>
            <person name="Weitzenegger T."/>
            <person name="Winters P."/>
            <person name="Wipat A."/>
            <person name="Yamamoto H."/>
            <person name="Yamane K."/>
            <person name="Yasumoto K."/>
            <person name="Yata K."/>
            <person name="Yoshida K."/>
            <person name="Yoshikawa H.-F."/>
            <person name="Zumstein E."/>
            <person name="Yoshikawa H."/>
            <person name="Danchin A."/>
        </authorList>
    </citation>
    <scope>NUCLEOTIDE SEQUENCE [LARGE SCALE GENOMIC DNA]</scope>
    <source>
        <strain>168</strain>
    </source>
</reference>
<reference key="3">
    <citation type="journal article" date="2009" name="Microbiology">
        <title>From a consortium sequence to a unified sequence: the Bacillus subtilis 168 reference genome a decade later.</title>
        <authorList>
            <person name="Barbe V."/>
            <person name="Cruveiller S."/>
            <person name="Kunst F."/>
            <person name="Lenoble P."/>
            <person name="Meurice G."/>
            <person name="Sekowska A."/>
            <person name="Vallenet D."/>
            <person name="Wang T."/>
            <person name="Moszer I."/>
            <person name="Medigue C."/>
            <person name="Danchin A."/>
        </authorList>
    </citation>
    <scope>SEQUENCE REVISION TO 74</scope>
</reference>
<dbReference type="EMBL" id="D83026">
    <property type="protein sequence ID" value="BAA11701.1"/>
    <property type="molecule type" value="Genomic_DNA"/>
</dbReference>
<dbReference type="EMBL" id="AL009126">
    <property type="protein sequence ID" value="CAB15929.2"/>
    <property type="molecule type" value="Genomic_DNA"/>
</dbReference>
<dbReference type="PIR" id="F70078">
    <property type="entry name" value="F70078"/>
</dbReference>
<dbReference type="RefSeq" id="WP_003243694.1">
    <property type="nucleotide sequence ID" value="NZ_OZ025638.1"/>
</dbReference>
<dbReference type="SMR" id="P42311"/>
<dbReference type="FunCoup" id="P42311">
    <property type="interactions" value="7"/>
</dbReference>
<dbReference type="PATRIC" id="fig|224308.179.peg.4226"/>
<dbReference type="InParanoid" id="P42311"/>
<dbReference type="Proteomes" id="UP000001570">
    <property type="component" value="Chromosome"/>
</dbReference>
<gene>
    <name type="primary">yxiT</name>
    <name type="ordered locus">BSU39030</name>
    <name type="ORF">N15G</name>
</gene>
<organism>
    <name type="scientific">Bacillus subtilis (strain 168)</name>
    <dbReference type="NCBI Taxonomy" id="224308"/>
    <lineage>
        <taxon>Bacteria</taxon>
        <taxon>Bacillati</taxon>
        <taxon>Bacillota</taxon>
        <taxon>Bacilli</taxon>
        <taxon>Bacillales</taxon>
        <taxon>Bacillaceae</taxon>
        <taxon>Bacillus</taxon>
    </lineage>
</organism>
<accession>P42311</accession>
<feature type="signal peptide" evidence="1">
    <location>
        <begin position="1"/>
        <end position="23"/>
    </location>
</feature>
<feature type="chain" id="PRO_0000013746" description="Uncharacterized protein YxiT">
    <location>
        <begin position="24"/>
        <end position="80"/>
    </location>
</feature>
<feature type="sequence conflict" description="In Ref. 1; BAA11701." evidence="2" ref="1">
    <original>N</original>
    <variation>D</variation>
    <location>
        <position position="74"/>
    </location>
</feature>